<sequence length="388" mass="40929">MTIQVLVVDDSSFFRRRVSEIVNQDPELEVIGVAVNGKEAVKMAAELKPHVITMDIEMPVMDGITAVREIMANNPIPILMFSSLTHDGAKATLDALDAGALDFLPKRFEDIATNKDEAIRLLQQRIRELGRRRIYKPLSRAGATAVPASARAGLSSTSPTLGSSTLGRSPASGLASSASRNSPTVSTPASAIRASGKQYKALLIGTSTGGPVALQKILTQFPASYPHPILLIQHMPAAFTPAFATRLNGLCQIEVKEAENGDQLKAGCAYLAPGGMQMMVERTGSISRLKVLAGSSDMNYKPSVDITFASASKAFNADVLAVVLTGMGADGREGARMLKTSGSTIWAQDEASCVVYGMPQAVAVAGLSTHSISLDQMAEAILKESGRG</sequence>
<comment type="function">
    <text evidence="1">Involved in chemotaxis. Part of a chemotaxis signal transduction system that modulates chemotaxis in response to various stimuli. Catalyzes the demethylation of specific methylglutamate residues introduced into the chemoreceptors (methyl-accepting chemotaxis proteins or MCP) by CheR. Also mediates the irreversible deamidation of specific glutamine residues to glutamic acid.</text>
</comment>
<comment type="catalytic activity">
    <reaction evidence="1">
        <text>[protein]-L-glutamate 5-O-methyl ester + H2O = L-glutamyl-[protein] + methanol + H(+)</text>
        <dbReference type="Rhea" id="RHEA:23236"/>
        <dbReference type="Rhea" id="RHEA-COMP:10208"/>
        <dbReference type="Rhea" id="RHEA-COMP:10311"/>
        <dbReference type="ChEBI" id="CHEBI:15377"/>
        <dbReference type="ChEBI" id="CHEBI:15378"/>
        <dbReference type="ChEBI" id="CHEBI:17790"/>
        <dbReference type="ChEBI" id="CHEBI:29973"/>
        <dbReference type="ChEBI" id="CHEBI:82795"/>
        <dbReference type="EC" id="3.1.1.61"/>
    </reaction>
</comment>
<comment type="catalytic activity">
    <reaction evidence="1">
        <text>L-glutaminyl-[protein] + H2O = L-glutamyl-[protein] + NH4(+)</text>
        <dbReference type="Rhea" id="RHEA:16441"/>
        <dbReference type="Rhea" id="RHEA-COMP:10207"/>
        <dbReference type="Rhea" id="RHEA-COMP:10208"/>
        <dbReference type="ChEBI" id="CHEBI:15377"/>
        <dbReference type="ChEBI" id="CHEBI:28938"/>
        <dbReference type="ChEBI" id="CHEBI:29973"/>
        <dbReference type="ChEBI" id="CHEBI:30011"/>
        <dbReference type="EC" id="3.5.1.44"/>
    </reaction>
</comment>
<comment type="subcellular location">
    <subcellularLocation>
        <location evidence="1">Cytoplasm</location>
    </subcellularLocation>
</comment>
<comment type="domain">
    <text evidence="1">Contains a C-terminal catalytic domain, and an N-terminal region which modulates catalytic activity.</text>
</comment>
<comment type="PTM">
    <text evidence="1">Phosphorylated by CheA. Phosphorylation of the N-terminal regulatory domain activates the methylesterase activity.</text>
</comment>
<comment type="similarity">
    <text evidence="1">Belongs to the CheB family.</text>
</comment>
<organism>
    <name type="scientific">Shewanella denitrificans (strain OS217 / ATCC BAA-1090 / DSM 15013)</name>
    <dbReference type="NCBI Taxonomy" id="318161"/>
    <lineage>
        <taxon>Bacteria</taxon>
        <taxon>Pseudomonadati</taxon>
        <taxon>Pseudomonadota</taxon>
        <taxon>Gammaproteobacteria</taxon>
        <taxon>Alteromonadales</taxon>
        <taxon>Shewanellaceae</taxon>
        <taxon>Shewanella</taxon>
    </lineage>
</organism>
<proteinExistence type="inferred from homology"/>
<gene>
    <name evidence="1" type="primary">cheB1</name>
    <name type="ordered locus">Sden_1347</name>
</gene>
<evidence type="ECO:0000255" key="1">
    <source>
        <dbReference type="HAMAP-Rule" id="MF_00099"/>
    </source>
</evidence>
<evidence type="ECO:0000256" key="2">
    <source>
        <dbReference type="SAM" id="MobiDB-lite"/>
    </source>
</evidence>
<reference key="1">
    <citation type="submission" date="2006-03" db="EMBL/GenBank/DDBJ databases">
        <title>Complete sequence of Shewanella denitrificans OS217.</title>
        <authorList>
            <consortium name="US DOE Joint Genome Institute"/>
            <person name="Copeland A."/>
            <person name="Lucas S."/>
            <person name="Lapidus A."/>
            <person name="Barry K."/>
            <person name="Detter J.C."/>
            <person name="Glavina del Rio T."/>
            <person name="Hammon N."/>
            <person name="Israni S."/>
            <person name="Dalin E."/>
            <person name="Tice H."/>
            <person name="Pitluck S."/>
            <person name="Brettin T."/>
            <person name="Bruce D."/>
            <person name="Han C."/>
            <person name="Tapia R."/>
            <person name="Gilna P."/>
            <person name="Kiss H."/>
            <person name="Schmutz J."/>
            <person name="Larimer F."/>
            <person name="Land M."/>
            <person name="Hauser L."/>
            <person name="Kyrpides N."/>
            <person name="Lykidis A."/>
            <person name="Richardson P."/>
        </authorList>
    </citation>
    <scope>NUCLEOTIDE SEQUENCE [LARGE SCALE GENOMIC DNA]</scope>
    <source>
        <strain>OS217 / ATCC BAA-1090 / DSM 15013</strain>
    </source>
</reference>
<name>CHEB1_SHEDO</name>
<feature type="chain" id="PRO_0000264318" description="Protein-glutamate methylesterase/protein-glutamine glutaminase 1">
    <location>
        <begin position="1"/>
        <end position="388"/>
    </location>
</feature>
<feature type="domain" description="Response regulatory" evidence="1">
    <location>
        <begin position="4"/>
        <end position="121"/>
    </location>
</feature>
<feature type="domain" description="CheB-type methylesterase" evidence="1">
    <location>
        <begin position="188"/>
        <end position="388"/>
    </location>
</feature>
<feature type="region of interest" description="Disordered" evidence="2">
    <location>
        <begin position="149"/>
        <end position="190"/>
    </location>
</feature>
<feature type="compositionally biased region" description="Low complexity" evidence="2">
    <location>
        <begin position="153"/>
        <end position="169"/>
    </location>
</feature>
<feature type="compositionally biased region" description="Polar residues" evidence="2">
    <location>
        <begin position="174"/>
        <end position="189"/>
    </location>
</feature>
<feature type="active site" evidence="1">
    <location>
        <position position="207"/>
    </location>
</feature>
<feature type="active site" evidence="1">
    <location>
        <position position="234"/>
    </location>
</feature>
<feature type="active site" evidence="1">
    <location>
        <position position="330"/>
    </location>
</feature>
<feature type="modified residue" description="4-aspartylphosphate" evidence="1">
    <location>
        <position position="55"/>
    </location>
</feature>
<protein>
    <recommendedName>
        <fullName evidence="1">Protein-glutamate methylesterase/protein-glutamine glutaminase 1</fullName>
        <ecNumber evidence="1">3.1.1.61</ecNumber>
        <ecNumber evidence="1">3.5.1.44</ecNumber>
    </recommendedName>
</protein>
<keyword id="KW-0145">Chemotaxis</keyword>
<keyword id="KW-0963">Cytoplasm</keyword>
<keyword id="KW-0378">Hydrolase</keyword>
<keyword id="KW-0597">Phosphoprotein</keyword>
<keyword id="KW-1185">Reference proteome</keyword>
<accession>Q12PJ3</accession>
<dbReference type="EC" id="3.1.1.61" evidence="1"/>
<dbReference type="EC" id="3.5.1.44" evidence="1"/>
<dbReference type="EMBL" id="CP000302">
    <property type="protein sequence ID" value="ABE54633.1"/>
    <property type="molecule type" value="Genomic_DNA"/>
</dbReference>
<dbReference type="RefSeq" id="WP_011495791.1">
    <property type="nucleotide sequence ID" value="NC_007954.1"/>
</dbReference>
<dbReference type="SMR" id="Q12PJ3"/>
<dbReference type="STRING" id="318161.Sden_1347"/>
<dbReference type="KEGG" id="sdn:Sden_1347"/>
<dbReference type="eggNOG" id="COG2201">
    <property type="taxonomic scope" value="Bacteria"/>
</dbReference>
<dbReference type="HOGENOM" id="CLU_000445_51_0_6"/>
<dbReference type="OrthoDB" id="9793421at2"/>
<dbReference type="Proteomes" id="UP000001982">
    <property type="component" value="Chromosome"/>
</dbReference>
<dbReference type="GO" id="GO:0005737">
    <property type="term" value="C:cytoplasm"/>
    <property type="evidence" value="ECO:0007669"/>
    <property type="project" value="UniProtKB-SubCell"/>
</dbReference>
<dbReference type="GO" id="GO:0000156">
    <property type="term" value="F:phosphorelay response regulator activity"/>
    <property type="evidence" value="ECO:0007669"/>
    <property type="project" value="InterPro"/>
</dbReference>
<dbReference type="GO" id="GO:0008984">
    <property type="term" value="F:protein-glutamate methylesterase activity"/>
    <property type="evidence" value="ECO:0007669"/>
    <property type="project" value="UniProtKB-UniRule"/>
</dbReference>
<dbReference type="GO" id="GO:0050568">
    <property type="term" value="F:protein-glutamine glutaminase activity"/>
    <property type="evidence" value="ECO:0007669"/>
    <property type="project" value="UniProtKB-UniRule"/>
</dbReference>
<dbReference type="GO" id="GO:0006935">
    <property type="term" value="P:chemotaxis"/>
    <property type="evidence" value="ECO:0007669"/>
    <property type="project" value="UniProtKB-UniRule"/>
</dbReference>
<dbReference type="CDD" id="cd16432">
    <property type="entry name" value="CheB_Rec"/>
    <property type="match status" value="1"/>
</dbReference>
<dbReference type="CDD" id="cd17541">
    <property type="entry name" value="REC_CheB-like"/>
    <property type="match status" value="1"/>
</dbReference>
<dbReference type="FunFam" id="3.40.50.2300:FF:000077">
    <property type="entry name" value="Chemotaxis response regulator"/>
    <property type="match status" value="1"/>
</dbReference>
<dbReference type="FunFam" id="3.40.50.180:FF:000001">
    <property type="entry name" value="Protein-glutamate methylesterase/protein-glutamine glutaminase"/>
    <property type="match status" value="1"/>
</dbReference>
<dbReference type="Gene3D" id="3.40.50.2300">
    <property type="match status" value="1"/>
</dbReference>
<dbReference type="Gene3D" id="3.40.50.180">
    <property type="entry name" value="Methylesterase CheB, C-terminal domain"/>
    <property type="match status" value="1"/>
</dbReference>
<dbReference type="HAMAP" id="MF_00099">
    <property type="entry name" value="CheB_chemtxs"/>
    <property type="match status" value="1"/>
</dbReference>
<dbReference type="InterPro" id="IPR008248">
    <property type="entry name" value="CheB-like"/>
</dbReference>
<dbReference type="InterPro" id="IPR035909">
    <property type="entry name" value="CheB_C"/>
</dbReference>
<dbReference type="InterPro" id="IPR011006">
    <property type="entry name" value="CheY-like_superfamily"/>
</dbReference>
<dbReference type="InterPro" id="IPR000673">
    <property type="entry name" value="Sig_transdc_resp-reg_Me-estase"/>
</dbReference>
<dbReference type="InterPro" id="IPR001789">
    <property type="entry name" value="Sig_transdc_resp-reg_receiver"/>
</dbReference>
<dbReference type="NCBIfam" id="NF001965">
    <property type="entry name" value="PRK00742.1"/>
    <property type="match status" value="1"/>
</dbReference>
<dbReference type="PANTHER" id="PTHR42872">
    <property type="entry name" value="PROTEIN-GLUTAMATE METHYLESTERASE/PROTEIN-GLUTAMINE GLUTAMINASE"/>
    <property type="match status" value="1"/>
</dbReference>
<dbReference type="PANTHER" id="PTHR42872:SF3">
    <property type="entry name" value="PROTEIN-GLUTAMATE METHYLESTERASE_PROTEIN-GLUTAMINE GLUTAMINASE 1"/>
    <property type="match status" value="1"/>
</dbReference>
<dbReference type="Pfam" id="PF01339">
    <property type="entry name" value="CheB_methylest"/>
    <property type="match status" value="1"/>
</dbReference>
<dbReference type="Pfam" id="PF00072">
    <property type="entry name" value="Response_reg"/>
    <property type="match status" value="1"/>
</dbReference>
<dbReference type="PIRSF" id="PIRSF000876">
    <property type="entry name" value="RR_chemtxs_CheB"/>
    <property type="match status" value="1"/>
</dbReference>
<dbReference type="SMART" id="SM00448">
    <property type="entry name" value="REC"/>
    <property type="match status" value="1"/>
</dbReference>
<dbReference type="SUPFAM" id="SSF52172">
    <property type="entry name" value="CheY-like"/>
    <property type="match status" value="1"/>
</dbReference>
<dbReference type="SUPFAM" id="SSF52738">
    <property type="entry name" value="Methylesterase CheB, C-terminal domain"/>
    <property type="match status" value="1"/>
</dbReference>
<dbReference type="PROSITE" id="PS50122">
    <property type="entry name" value="CHEB"/>
    <property type="match status" value="1"/>
</dbReference>
<dbReference type="PROSITE" id="PS50110">
    <property type="entry name" value="RESPONSE_REGULATORY"/>
    <property type="match status" value="1"/>
</dbReference>